<proteinExistence type="inferred from homology"/>
<evidence type="ECO:0000255" key="1">
    <source>
        <dbReference type="HAMAP-Rule" id="MF_00357"/>
    </source>
</evidence>
<evidence type="ECO:0000255" key="2">
    <source>
        <dbReference type="PROSITE-ProRule" id="PRU01261"/>
    </source>
</evidence>
<evidence type="ECO:0000256" key="3">
    <source>
        <dbReference type="SAM" id="MobiDB-lite"/>
    </source>
</evidence>
<feature type="chain" id="PRO_0000303137" description="Probable DNA-directed RNA polymerase subunit delta">
    <location>
        <begin position="1"/>
        <end position="176"/>
    </location>
</feature>
<feature type="domain" description="HTH HARE-type" evidence="2">
    <location>
        <begin position="14"/>
        <end position="81"/>
    </location>
</feature>
<feature type="region of interest" description="Disordered" evidence="3">
    <location>
        <begin position="114"/>
        <end position="176"/>
    </location>
</feature>
<feature type="compositionally biased region" description="Acidic residues" evidence="3">
    <location>
        <begin position="116"/>
        <end position="145"/>
    </location>
</feature>
<feature type="compositionally biased region" description="Acidic residues" evidence="3">
    <location>
        <begin position="153"/>
        <end position="176"/>
    </location>
</feature>
<name>RPOE_STAAB</name>
<protein>
    <recommendedName>
        <fullName evidence="1">Probable DNA-directed RNA polymerase subunit delta</fullName>
    </recommendedName>
    <alternativeName>
        <fullName evidence="1">RNAP delta factor</fullName>
    </alternativeName>
</protein>
<reference key="1">
    <citation type="journal article" date="2007" name="PLoS ONE">
        <title>Molecular correlates of host specialization in Staphylococcus aureus.</title>
        <authorList>
            <person name="Herron-Olson L."/>
            <person name="Fitzgerald J.R."/>
            <person name="Musser J.M."/>
            <person name="Kapur V."/>
        </authorList>
    </citation>
    <scope>NUCLEOTIDE SEQUENCE [LARGE SCALE GENOMIC DNA]</scope>
    <source>
        <strain>bovine RF122 / ET3-1</strain>
    </source>
</reference>
<keyword id="KW-0240">DNA-directed RNA polymerase</keyword>
<keyword id="KW-0548">Nucleotidyltransferase</keyword>
<keyword id="KW-0804">Transcription</keyword>
<keyword id="KW-0808">Transferase</keyword>
<gene>
    <name evidence="1" type="primary">rpoE</name>
    <name type="ordered locus">SAB2012c</name>
</gene>
<dbReference type="EMBL" id="AJ938182">
    <property type="protein sequence ID" value="CAI81701.1"/>
    <property type="molecule type" value="Genomic_DNA"/>
</dbReference>
<dbReference type="RefSeq" id="WP_000701493.1">
    <property type="nucleotide sequence ID" value="NC_007622.1"/>
</dbReference>
<dbReference type="SMR" id="Q2YUM5"/>
<dbReference type="KEGG" id="sab:SAB2012c"/>
<dbReference type="HOGENOM" id="CLU_116648_1_0_9"/>
<dbReference type="GO" id="GO:0000428">
    <property type="term" value="C:DNA-directed RNA polymerase complex"/>
    <property type="evidence" value="ECO:0007669"/>
    <property type="project" value="UniProtKB-KW"/>
</dbReference>
<dbReference type="GO" id="GO:0003899">
    <property type="term" value="F:DNA-directed RNA polymerase activity"/>
    <property type="evidence" value="ECO:0007669"/>
    <property type="project" value="UniProtKB-UniRule"/>
</dbReference>
<dbReference type="GO" id="GO:0006351">
    <property type="term" value="P:DNA-templated transcription"/>
    <property type="evidence" value="ECO:0007669"/>
    <property type="project" value="InterPro"/>
</dbReference>
<dbReference type="GO" id="GO:0006355">
    <property type="term" value="P:regulation of DNA-templated transcription"/>
    <property type="evidence" value="ECO:0007669"/>
    <property type="project" value="UniProtKB-UniRule"/>
</dbReference>
<dbReference type="Gene3D" id="1.10.10.1250">
    <property type="entry name" value="RNA polymerase, subunit delta, N-terminal domain"/>
    <property type="match status" value="1"/>
</dbReference>
<dbReference type="HAMAP" id="MF_00357">
    <property type="entry name" value="RNApol_bact_RpoE"/>
    <property type="match status" value="1"/>
</dbReference>
<dbReference type="InterPro" id="IPR007759">
    <property type="entry name" value="Asxl_HARE-HTH"/>
</dbReference>
<dbReference type="InterPro" id="IPR038087">
    <property type="entry name" value="RNAP_delta_N_dom_sf"/>
</dbReference>
<dbReference type="InterPro" id="IPR029757">
    <property type="entry name" value="RpoE"/>
</dbReference>
<dbReference type="NCBIfam" id="TIGR04567">
    <property type="entry name" value="RNAP_delt_lowGC"/>
    <property type="match status" value="1"/>
</dbReference>
<dbReference type="Pfam" id="PF05066">
    <property type="entry name" value="HARE-HTH"/>
    <property type="match status" value="1"/>
</dbReference>
<dbReference type="PROSITE" id="PS51913">
    <property type="entry name" value="HTH_HARE"/>
    <property type="match status" value="1"/>
</dbReference>
<sequence length="176" mass="20840">MKIQDYTKQMVDEKSFIDMAYTLLNDKGETMNLYDIIDEFRALGDYEYEEIETRVVQFYTDLNTDGRFLNVGENLWGLRDWYSVDDIEEKIAPTIQKFDVLDADDEEDQNLKLLGEDEMDDDDDIPAQTDDQEELNDPEDEQVEEEINHSDIVIEEDEDELDEDEEDFEDEEDFKA</sequence>
<organism>
    <name type="scientific">Staphylococcus aureus (strain bovine RF122 / ET3-1)</name>
    <dbReference type="NCBI Taxonomy" id="273036"/>
    <lineage>
        <taxon>Bacteria</taxon>
        <taxon>Bacillati</taxon>
        <taxon>Bacillota</taxon>
        <taxon>Bacilli</taxon>
        <taxon>Bacillales</taxon>
        <taxon>Staphylococcaceae</taxon>
        <taxon>Staphylococcus</taxon>
    </lineage>
</organism>
<accession>Q2YUM5</accession>
<comment type="function">
    <text evidence="1">Participates in both the initiation and recycling phases of transcription. In the presence of the delta subunit, RNAP displays an increased specificity of transcription, a decreased affinity for nucleic acids, and an increased efficiency of RNA synthesis because of enhanced recycling.</text>
</comment>
<comment type="subunit">
    <text evidence="1">RNAP is composed of a core of 2 alpha, a beta and a beta' subunits. The core is associated with a delta subunit and one of several sigma factors.</text>
</comment>
<comment type="similarity">
    <text evidence="1">Belongs to the RpoE family.</text>
</comment>